<accession>Q65P77</accession>
<accession>Q62ZL6</accession>
<sequence length="281" mass="31312">MNQERLIAAEDITFRYQKDADRPALDHVSFHVSKGEWLAIVGHNGSGKSTLARALNGLILPDEGSIKVGGIKLTEETVWDVRKKVGMVFQNPDNQFVGTTVRDDVAFGLENSGVPREDMVERVDWAVQQVNMQEFLDQEPHHLSGGQKQRVAIAGVLAARPDIMILDEATSMLDPMGREEVLDTVRRLKDQGMVTVISITHDLNEAAKADRIIVMNSGRKFAEGTPQEVFRLNQDLIKIGLDLPFSFQLTQMLKESGLALKGDHLTQEGLVNELWTLKSKM</sequence>
<organism>
    <name type="scientific">Bacillus licheniformis (strain ATCC 14580 / DSM 13 / JCM 2505 / CCUG 7422 / NBRC 12200 / NCIMB 9375 / NCTC 10341 / NRRL NRS-1264 / Gibson 46)</name>
    <dbReference type="NCBI Taxonomy" id="279010"/>
    <lineage>
        <taxon>Bacteria</taxon>
        <taxon>Bacillati</taxon>
        <taxon>Bacillota</taxon>
        <taxon>Bacilli</taxon>
        <taxon>Bacillales</taxon>
        <taxon>Bacillaceae</taxon>
        <taxon>Bacillus</taxon>
    </lineage>
</organism>
<name>ECFA1_BACLD</name>
<dbReference type="EC" id="7.-.-.-" evidence="1"/>
<dbReference type="EMBL" id="AE017333">
    <property type="protein sequence ID" value="AAU39137.1"/>
    <property type="molecule type" value="Genomic_DNA"/>
</dbReference>
<dbReference type="EMBL" id="CP000002">
    <property type="protein sequence ID" value="AAU21792.1"/>
    <property type="molecule type" value="Genomic_DNA"/>
</dbReference>
<dbReference type="RefSeq" id="WP_003178386.1">
    <property type="nucleotide sequence ID" value="NC_006322.1"/>
</dbReference>
<dbReference type="SMR" id="Q65P77"/>
<dbReference type="STRING" id="279010.BL01023"/>
<dbReference type="KEGG" id="bld:BLi00163"/>
<dbReference type="KEGG" id="bli:BL01023"/>
<dbReference type="PATRIC" id="fig|279010.13.peg.153"/>
<dbReference type="eggNOG" id="COG1122">
    <property type="taxonomic scope" value="Bacteria"/>
</dbReference>
<dbReference type="HOGENOM" id="CLU_000604_1_22_9"/>
<dbReference type="Proteomes" id="UP000000606">
    <property type="component" value="Chromosome"/>
</dbReference>
<dbReference type="GO" id="GO:0043190">
    <property type="term" value="C:ATP-binding cassette (ABC) transporter complex"/>
    <property type="evidence" value="ECO:0007669"/>
    <property type="project" value="TreeGrafter"/>
</dbReference>
<dbReference type="GO" id="GO:0005524">
    <property type="term" value="F:ATP binding"/>
    <property type="evidence" value="ECO:0007669"/>
    <property type="project" value="UniProtKB-KW"/>
</dbReference>
<dbReference type="GO" id="GO:0016887">
    <property type="term" value="F:ATP hydrolysis activity"/>
    <property type="evidence" value="ECO:0007669"/>
    <property type="project" value="InterPro"/>
</dbReference>
<dbReference type="GO" id="GO:0042626">
    <property type="term" value="F:ATPase-coupled transmembrane transporter activity"/>
    <property type="evidence" value="ECO:0007669"/>
    <property type="project" value="TreeGrafter"/>
</dbReference>
<dbReference type="CDD" id="cd03225">
    <property type="entry name" value="ABC_cobalt_CbiO_domain1"/>
    <property type="match status" value="1"/>
</dbReference>
<dbReference type="FunFam" id="3.40.50.300:FF:000224">
    <property type="entry name" value="Energy-coupling factor transporter ATP-binding protein EcfA"/>
    <property type="match status" value="1"/>
</dbReference>
<dbReference type="Gene3D" id="3.40.50.300">
    <property type="entry name" value="P-loop containing nucleotide triphosphate hydrolases"/>
    <property type="match status" value="1"/>
</dbReference>
<dbReference type="InterPro" id="IPR003593">
    <property type="entry name" value="AAA+_ATPase"/>
</dbReference>
<dbReference type="InterPro" id="IPR003439">
    <property type="entry name" value="ABC_transporter-like_ATP-bd"/>
</dbReference>
<dbReference type="InterPro" id="IPR017871">
    <property type="entry name" value="ABC_transporter-like_CS"/>
</dbReference>
<dbReference type="InterPro" id="IPR015856">
    <property type="entry name" value="ABC_transpr_CbiO/EcfA_su"/>
</dbReference>
<dbReference type="InterPro" id="IPR050095">
    <property type="entry name" value="ECF_ABC_transporter_ATP-bd"/>
</dbReference>
<dbReference type="InterPro" id="IPR030947">
    <property type="entry name" value="EcfA_1"/>
</dbReference>
<dbReference type="InterPro" id="IPR027417">
    <property type="entry name" value="P-loop_NTPase"/>
</dbReference>
<dbReference type="NCBIfam" id="TIGR04520">
    <property type="entry name" value="ECF_ATPase_1"/>
    <property type="match status" value="1"/>
</dbReference>
<dbReference type="NCBIfam" id="NF010156">
    <property type="entry name" value="PRK13635.1"/>
    <property type="match status" value="1"/>
</dbReference>
<dbReference type="NCBIfam" id="NF010167">
    <property type="entry name" value="PRK13648.1"/>
    <property type="match status" value="1"/>
</dbReference>
<dbReference type="PANTHER" id="PTHR43553:SF24">
    <property type="entry name" value="ENERGY-COUPLING FACTOR TRANSPORTER ATP-BINDING PROTEIN ECFA1"/>
    <property type="match status" value="1"/>
</dbReference>
<dbReference type="PANTHER" id="PTHR43553">
    <property type="entry name" value="HEAVY METAL TRANSPORTER"/>
    <property type="match status" value="1"/>
</dbReference>
<dbReference type="Pfam" id="PF00005">
    <property type="entry name" value="ABC_tran"/>
    <property type="match status" value="1"/>
</dbReference>
<dbReference type="SMART" id="SM00382">
    <property type="entry name" value="AAA"/>
    <property type="match status" value="1"/>
</dbReference>
<dbReference type="SUPFAM" id="SSF52540">
    <property type="entry name" value="P-loop containing nucleoside triphosphate hydrolases"/>
    <property type="match status" value="1"/>
</dbReference>
<dbReference type="PROSITE" id="PS00211">
    <property type="entry name" value="ABC_TRANSPORTER_1"/>
    <property type="match status" value="1"/>
</dbReference>
<dbReference type="PROSITE" id="PS50893">
    <property type="entry name" value="ABC_TRANSPORTER_2"/>
    <property type="match status" value="1"/>
</dbReference>
<dbReference type="PROSITE" id="PS51246">
    <property type="entry name" value="CBIO"/>
    <property type="match status" value="1"/>
</dbReference>
<comment type="function">
    <text evidence="1">ATP-binding (A) component of a common energy-coupling factor (ECF) ABC-transporter complex. Unlike classic ABC transporters this ECF transporter provides the energy necessary to transport a number of different substrates.</text>
</comment>
<comment type="subunit">
    <text evidence="1">Forms a stable energy-coupling factor (ECF) transporter complex composed of 2 membrane-embedded substrate-binding proteins (S component), 2 ATP-binding proteins (A component) and 2 transmembrane proteins (T component).</text>
</comment>
<comment type="subcellular location">
    <subcellularLocation>
        <location evidence="1">Cell membrane</location>
        <topology evidence="1">Peripheral membrane protein</topology>
    </subcellularLocation>
</comment>
<comment type="similarity">
    <text evidence="1">Belongs to the ABC transporter superfamily. Energy-coupling factor EcfA family.</text>
</comment>
<proteinExistence type="inferred from homology"/>
<keyword id="KW-0067">ATP-binding</keyword>
<keyword id="KW-1003">Cell membrane</keyword>
<keyword id="KW-0472">Membrane</keyword>
<keyword id="KW-0547">Nucleotide-binding</keyword>
<keyword id="KW-1185">Reference proteome</keyword>
<keyword id="KW-1278">Translocase</keyword>
<keyword id="KW-0813">Transport</keyword>
<reference key="1">
    <citation type="journal article" date="2004" name="J. Mol. Microbiol. Biotechnol.">
        <title>The complete genome sequence of Bacillus licheniformis DSM13, an organism with great industrial potential.</title>
        <authorList>
            <person name="Veith B."/>
            <person name="Herzberg C."/>
            <person name="Steckel S."/>
            <person name="Feesche J."/>
            <person name="Maurer K.H."/>
            <person name="Ehrenreich P."/>
            <person name="Baeumer S."/>
            <person name="Henne A."/>
            <person name="Liesegang H."/>
            <person name="Merkl R."/>
            <person name="Ehrenreich A."/>
            <person name="Gottschalk G."/>
        </authorList>
    </citation>
    <scope>NUCLEOTIDE SEQUENCE [LARGE SCALE GENOMIC DNA]</scope>
    <source>
        <strain>ATCC 14580 / DSM 13 / JCM 2505 / CCUG 7422 / NBRC 12200 / NCIMB 9375 / NCTC 10341 / NRRL NRS-1264 / Gibson 46</strain>
    </source>
</reference>
<reference key="2">
    <citation type="journal article" date="2004" name="Genome Biol.">
        <title>Complete genome sequence of the industrial bacterium Bacillus licheniformis and comparisons with closely related Bacillus species.</title>
        <authorList>
            <person name="Rey M.W."/>
            <person name="Ramaiya P."/>
            <person name="Nelson B.A."/>
            <person name="Brody-Karpin S.D."/>
            <person name="Zaretsky E.J."/>
            <person name="Tang M."/>
            <person name="Lopez de Leon A."/>
            <person name="Xiang H."/>
            <person name="Gusti V."/>
            <person name="Clausen I.G."/>
            <person name="Olsen P.B."/>
            <person name="Rasmussen M.D."/>
            <person name="Andersen J.T."/>
            <person name="Joergensen P.L."/>
            <person name="Larsen T.S."/>
            <person name="Sorokin A."/>
            <person name="Bolotin A."/>
            <person name="Lapidus A."/>
            <person name="Galleron N."/>
            <person name="Ehrlich S.D."/>
            <person name="Berka R.M."/>
        </authorList>
    </citation>
    <scope>NUCLEOTIDE SEQUENCE [LARGE SCALE GENOMIC DNA]</scope>
    <source>
        <strain>ATCC 14580 / DSM 13 / JCM 2505 / CCUG 7422 / NBRC 12200 / NCIMB 9375 / NCTC 10341 / NRRL NRS-1264 / Gibson 46</strain>
    </source>
</reference>
<feature type="chain" id="PRO_0000287923" description="Energy-coupling factor transporter ATP-binding protein EcfA1">
    <location>
        <begin position="1"/>
        <end position="281"/>
    </location>
</feature>
<feature type="domain" description="ABC transporter" evidence="1">
    <location>
        <begin position="7"/>
        <end position="242"/>
    </location>
</feature>
<feature type="binding site" evidence="1">
    <location>
        <begin position="42"/>
        <end position="49"/>
    </location>
    <ligand>
        <name>ATP</name>
        <dbReference type="ChEBI" id="CHEBI:30616"/>
    </ligand>
</feature>
<gene>
    <name evidence="1" type="primary">ecfA1</name>
    <name type="synonym">cbiO1</name>
    <name type="ordered locus">BLi00163</name>
    <name type="ordered locus">BL01023</name>
</gene>
<protein>
    <recommendedName>
        <fullName evidence="1">Energy-coupling factor transporter ATP-binding protein EcfA1</fullName>
        <shortName evidence="1">ECF transporter A component EcfA1</shortName>
        <ecNumber evidence="1">7.-.-.-</ecNumber>
    </recommendedName>
</protein>
<evidence type="ECO:0000255" key="1">
    <source>
        <dbReference type="HAMAP-Rule" id="MF_01710"/>
    </source>
</evidence>